<sequence>MADQPQFKWAIAHIFSSFNNTIITVTDLTGAETLAKTSGGMVVKQDRNESSPYAAMQMAMNVAEQIKAKGIQGVHIRVRAPGGNHQRSPGPGAQAAIRSLARAGLRIGRIEDVTPIPHDGTRAPGGKRGRRV</sequence>
<feature type="chain" id="PRO_0000294907" description="Small ribosomal subunit protein uS11">
    <location>
        <begin position="1"/>
        <end position="132"/>
    </location>
</feature>
<feature type="region of interest" description="Disordered" evidence="2">
    <location>
        <begin position="113"/>
        <end position="132"/>
    </location>
</feature>
<keyword id="KW-1185">Reference proteome</keyword>
<keyword id="KW-0687">Ribonucleoprotein</keyword>
<keyword id="KW-0689">Ribosomal protein</keyword>
<keyword id="KW-0694">RNA-binding</keyword>
<keyword id="KW-0699">rRNA-binding</keyword>
<evidence type="ECO:0000255" key="1">
    <source>
        <dbReference type="HAMAP-Rule" id="MF_01310"/>
    </source>
</evidence>
<evidence type="ECO:0000256" key="2">
    <source>
        <dbReference type="SAM" id="MobiDB-lite"/>
    </source>
</evidence>
<evidence type="ECO:0000305" key="3"/>
<name>RS11_METAR</name>
<proteinExistence type="inferred from homology"/>
<protein>
    <recommendedName>
        <fullName evidence="1">Small ribosomal subunit protein uS11</fullName>
    </recommendedName>
    <alternativeName>
        <fullName evidence="3">30S ribosomal protein S11</fullName>
    </alternativeName>
</protein>
<organism>
    <name type="scientific">Methanocella arvoryzae (strain DSM 22066 / NBRC 105507 / MRE50)</name>
    <dbReference type="NCBI Taxonomy" id="351160"/>
    <lineage>
        <taxon>Archaea</taxon>
        <taxon>Methanobacteriati</taxon>
        <taxon>Methanobacteriota</taxon>
        <taxon>Stenosarchaea group</taxon>
        <taxon>Methanomicrobia</taxon>
        <taxon>Methanocellales</taxon>
        <taxon>Methanocellaceae</taxon>
        <taxon>Methanocella</taxon>
    </lineage>
</organism>
<reference key="1">
    <citation type="journal article" date="2006" name="Science">
        <title>Genome of rice cluster I archaea -- the key methane producers in the rice rhizosphere.</title>
        <authorList>
            <person name="Erkel C."/>
            <person name="Kube M."/>
            <person name="Reinhardt R."/>
            <person name="Liesack W."/>
        </authorList>
    </citation>
    <scope>NUCLEOTIDE SEQUENCE [LARGE SCALE GENOMIC DNA]</scope>
    <source>
        <strain>DSM 22066 / NBRC 105507 / MRE50</strain>
    </source>
</reference>
<accession>Q0W1V4</accession>
<comment type="function">
    <text evidence="1">Located on the platform of the 30S subunit.</text>
</comment>
<comment type="subunit">
    <text evidence="1">Part of the 30S ribosomal subunit.</text>
</comment>
<comment type="similarity">
    <text evidence="1">Belongs to the universal ribosomal protein uS11 family.</text>
</comment>
<dbReference type="EMBL" id="AM114193">
    <property type="protein sequence ID" value="CAJ37639.1"/>
    <property type="molecule type" value="Genomic_DNA"/>
</dbReference>
<dbReference type="RefSeq" id="WP_012034946.1">
    <property type="nucleotide sequence ID" value="NC_009464.1"/>
</dbReference>
<dbReference type="SMR" id="Q0W1V4"/>
<dbReference type="STRING" id="351160.RCIX2582"/>
<dbReference type="GeneID" id="5144675"/>
<dbReference type="KEGG" id="rci:RCIX2582"/>
<dbReference type="PATRIC" id="fig|351160.9.peg.644"/>
<dbReference type="eggNOG" id="arCOG04240">
    <property type="taxonomic scope" value="Archaea"/>
</dbReference>
<dbReference type="OrthoDB" id="12054at2157"/>
<dbReference type="Proteomes" id="UP000000663">
    <property type="component" value="Chromosome"/>
</dbReference>
<dbReference type="GO" id="GO:1990904">
    <property type="term" value="C:ribonucleoprotein complex"/>
    <property type="evidence" value="ECO:0007669"/>
    <property type="project" value="UniProtKB-KW"/>
</dbReference>
<dbReference type="GO" id="GO:0005840">
    <property type="term" value="C:ribosome"/>
    <property type="evidence" value="ECO:0007669"/>
    <property type="project" value="UniProtKB-KW"/>
</dbReference>
<dbReference type="GO" id="GO:0019843">
    <property type="term" value="F:rRNA binding"/>
    <property type="evidence" value="ECO:0007669"/>
    <property type="project" value="UniProtKB-UniRule"/>
</dbReference>
<dbReference type="GO" id="GO:0003735">
    <property type="term" value="F:structural constituent of ribosome"/>
    <property type="evidence" value="ECO:0007669"/>
    <property type="project" value="InterPro"/>
</dbReference>
<dbReference type="GO" id="GO:0006412">
    <property type="term" value="P:translation"/>
    <property type="evidence" value="ECO:0007669"/>
    <property type="project" value="UniProtKB-UniRule"/>
</dbReference>
<dbReference type="FunFam" id="3.30.420.80:FF:000007">
    <property type="entry name" value="30S ribosomal protein S11"/>
    <property type="match status" value="1"/>
</dbReference>
<dbReference type="Gene3D" id="3.30.420.80">
    <property type="entry name" value="Ribosomal protein S11"/>
    <property type="match status" value="1"/>
</dbReference>
<dbReference type="HAMAP" id="MF_01310">
    <property type="entry name" value="Ribosomal_uS11"/>
    <property type="match status" value="1"/>
</dbReference>
<dbReference type="InterPro" id="IPR001971">
    <property type="entry name" value="Ribosomal_uS11"/>
</dbReference>
<dbReference type="InterPro" id="IPR019961">
    <property type="entry name" value="Ribosomal_uS11_archaeal"/>
</dbReference>
<dbReference type="InterPro" id="IPR018102">
    <property type="entry name" value="Ribosomal_uS11_CS"/>
</dbReference>
<dbReference type="InterPro" id="IPR036967">
    <property type="entry name" value="Ribosomal_uS11_sf"/>
</dbReference>
<dbReference type="NCBIfam" id="TIGR03628">
    <property type="entry name" value="arch_S11P"/>
    <property type="match status" value="1"/>
</dbReference>
<dbReference type="NCBIfam" id="NF007176">
    <property type="entry name" value="PRK09607.1"/>
    <property type="match status" value="1"/>
</dbReference>
<dbReference type="PANTHER" id="PTHR11759">
    <property type="entry name" value="40S RIBOSOMAL PROTEIN S14/30S RIBOSOMAL PROTEIN S11"/>
    <property type="match status" value="1"/>
</dbReference>
<dbReference type="Pfam" id="PF00411">
    <property type="entry name" value="Ribosomal_S11"/>
    <property type="match status" value="1"/>
</dbReference>
<dbReference type="PIRSF" id="PIRSF002131">
    <property type="entry name" value="Ribosomal_S11"/>
    <property type="match status" value="1"/>
</dbReference>
<dbReference type="SUPFAM" id="SSF53137">
    <property type="entry name" value="Translational machinery components"/>
    <property type="match status" value="1"/>
</dbReference>
<dbReference type="PROSITE" id="PS00054">
    <property type="entry name" value="RIBOSOMAL_S11"/>
    <property type="match status" value="1"/>
</dbReference>
<gene>
    <name evidence="1" type="primary">rps11</name>
    <name type="ordered locus">UNCMA_06170</name>
    <name type="ORF">RCIX2582</name>
</gene>